<dbReference type="EMBL" id="AJ243325">
    <property type="protein sequence ID" value="CAB96215.1"/>
    <property type="molecule type" value="mRNA"/>
</dbReference>
<dbReference type="RefSeq" id="NP_001392252.1">
    <property type="nucleotide sequence ID" value="NM_001405323.1"/>
</dbReference>
<dbReference type="PDB" id="1G5U">
    <property type="method" value="X-ray"/>
    <property type="resolution" value="3.10 A"/>
    <property type="chains" value="A/B=1-131"/>
</dbReference>
<dbReference type="PDBsum" id="1G5U"/>
<dbReference type="SMR" id="Q9LEI8"/>
<dbReference type="Allergome" id="397">
    <property type="allergen name" value="Hev b 8"/>
</dbReference>
<dbReference type="Allergome" id="403">
    <property type="allergen name" value="Hev b 8.0204"/>
</dbReference>
<dbReference type="GeneID" id="110650332"/>
<dbReference type="OrthoDB" id="421374at2759"/>
<dbReference type="EvolutionaryTrace" id="Q9LEI8"/>
<dbReference type="GO" id="GO:0005938">
    <property type="term" value="C:cell cortex"/>
    <property type="evidence" value="ECO:0007669"/>
    <property type="project" value="TreeGrafter"/>
</dbReference>
<dbReference type="GO" id="GO:0005856">
    <property type="term" value="C:cytoskeleton"/>
    <property type="evidence" value="ECO:0007669"/>
    <property type="project" value="UniProtKB-SubCell"/>
</dbReference>
<dbReference type="GO" id="GO:0003785">
    <property type="term" value="F:actin monomer binding"/>
    <property type="evidence" value="ECO:0007669"/>
    <property type="project" value="TreeGrafter"/>
</dbReference>
<dbReference type="CDD" id="cd00148">
    <property type="entry name" value="PROF"/>
    <property type="match status" value="1"/>
</dbReference>
<dbReference type="FunFam" id="3.30.450.30:FF:000001">
    <property type="entry name" value="Profilin"/>
    <property type="match status" value="1"/>
</dbReference>
<dbReference type="Gene3D" id="3.30.450.30">
    <property type="entry name" value="Dynein light chain 2a, cytoplasmic"/>
    <property type="match status" value="1"/>
</dbReference>
<dbReference type="InterPro" id="IPR048278">
    <property type="entry name" value="PFN"/>
</dbReference>
<dbReference type="InterPro" id="IPR005455">
    <property type="entry name" value="PFN_euk"/>
</dbReference>
<dbReference type="InterPro" id="IPR036140">
    <property type="entry name" value="PFN_sf"/>
</dbReference>
<dbReference type="InterPro" id="IPR027310">
    <property type="entry name" value="Profilin_CS"/>
</dbReference>
<dbReference type="PANTHER" id="PTHR11604">
    <property type="entry name" value="PROFILIN"/>
    <property type="match status" value="1"/>
</dbReference>
<dbReference type="PANTHER" id="PTHR11604:SF35">
    <property type="entry name" value="PROFILIN-3"/>
    <property type="match status" value="1"/>
</dbReference>
<dbReference type="Pfam" id="PF00235">
    <property type="entry name" value="Profilin"/>
    <property type="match status" value="1"/>
</dbReference>
<dbReference type="PRINTS" id="PR00392">
    <property type="entry name" value="PROFILIN"/>
</dbReference>
<dbReference type="PRINTS" id="PR01640">
    <property type="entry name" value="PROFILINPLNT"/>
</dbReference>
<dbReference type="SMART" id="SM00392">
    <property type="entry name" value="PROF"/>
    <property type="match status" value="1"/>
</dbReference>
<dbReference type="SUPFAM" id="SSF55770">
    <property type="entry name" value="Profilin (actin-binding protein)"/>
    <property type="match status" value="1"/>
</dbReference>
<dbReference type="PROSITE" id="PS00414">
    <property type="entry name" value="PROFILIN"/>
    <property type="match status" value="1"/>
</dbReference>
<sequence>MSWQTYVDDHLMCDIDGHRLTAAAIIGHDGSVWAQSSSFPQFKSDEVAAVMKDFDEPGSLAPTGLHLGGTKYMVIQGEPGAVIRGKKGSGGITVKKTGQALIIGIYDEPLTPGQCNMIVERLGDYLLDQGL</sequence>
<protein>
    <recommendedName>
        <fullName>Profilin-6</fullName>
    </recommendedName>
    <alternativeName>
        <fullName>Pollen allergen Hev b 8.0204</fullName>
    </alternativeName>
    <allergenName>Hev b 8.0204</allergenName>
</protein>
<accession>Q9LEI8</accession>
<organism>
    <name type="scientific">Hevea brasiliensis</name>
    <name type="common">Para rubber tree</name>
    <name type="synonym">Siphonia brasiliensis</name>
    <dbReference type="NCBI Taxonomy" id="3981"/>
    <lineage>
        <taxon>Eukaryota</taxon>
        <taxon>Viridiplantae</taxon>
        <taxon>Streptophyta</taxon>
        <taxon>Embryophyta</taxon>
        <taxon>Tracheophyta</taxon>
        <taxon>Spermatophyta</taxon>
        <taxon>Magnoliopsida</taxon>
        <taxon>eudicotyledons</taxon>
        <taxon>Gunneridae</taxon>
        <taxon>Pentapetalae</taxon>
        <taxon>rosids</taxon>
        <taxon>fabids</taxon>
        <taxon>Malpighiales</taxon>
        <taxon>Euphorbiaceae</taxon>
        <taxon>Crotonoideae</taxon>
        <taxon>Micrandreae</taxon>
        <taxon>Hevea</taxon>
    </lineage>
</organism>
<feature type="initiator methionine" description="Removed" evidence="1">
    <location>
        <position position="1"/>
    </location>
</feature>
<feature type="chain" id="PRO_0000199638" description="Profilin-6">
    <location>
        <begin position="2"/>
        <end position="131"/>
    </location>
</feature>
<feature type="turn" evidence="3">
    <location>
        <begin position="3"/>
        <end position="9"/>
    </location>
</feature>
<feature type="strand" evidence="3">
    <location>
        <begin position="24"/>
        <end position="27"/>
    </location>
</feature>
<feature type="helix" evidence="3">
    <location>
        <begin position="44"/>
        <end position="55"/>
    </location>
</feature>
<feature type="strand" evidence="3">
    <location>
        <begin position="56"/>
        <end position="58"/>
    </location>
</feature>
<feature type="helix" evidence="3">
    <location>
        <begin position="60"/>
        <end position="63"/>
    </location>
</feature>
<feature type="strand" evidence="3">
    <location>
        <begin position="71"/>
        <end position="74"/>
    </location>
</feature>
<feature type="turn" evidence="3">
    <location>
        <begin position="79"/>
        <end position="81"/>
    </location>
</feature>
<feature type="strand" evidence="3">
    <location>
        <begin position="84"/>
        <end position="86"/>
    </location>
</feature>
<feature type="strand" evidence="3">
    <location>
        <begin position="91"/>
        <end position="96"/>
    </location>
</feature>
<feature type="strand" evidence="3">
    <location>
        <begin position="98"/>
        <end position="106"/>
    </location>
</feature>
<feature type="helix" evidence="3">
    <location>
        <begin position="112"/>
        <end position="127"/>
    </location>
</feature>
<feature type="turn" evidence="3">
    <location>
        <begin position="128"/>
        <end position="130"/>
    </location>
</feature>
<keyword id="KW-0002">3D-structure</keyword>
<keyword id="KW-0009">Actin-binding</keyword>
<keyword id="KW-0020">Allergen</keyword>
<keyword id="KW-0963">Cytoplasm</keyword>
<keyword id="KW-0206">Cytoskeleton</keyword>
<comment type="function">
    <text evidence="1">Binds to actin and affects the structure of the cytoskeleton. At high concentrations, profilin prevents the polymerization of actin, whereas it enhances it at low concentrations. By binding to PIP2, it inhibits the formation of IP3 and DG (By similarity).</text>
</comment>
<comment type="subunit">
    <text>Occurs in many kinds of cells as a complex with monomeric actin in a 1:1 ratio.</text>
</comment>
<comment type="subcellular location">
    <subcellularLocation>
        <location evidence="1">Cytoplasm</location>
        <location evidence="1">Cytoskeleton</location>
    </subcellularLocation>
</comment>
<comment type="allergen">
    <text>Causes an allergic reaction in human. Involved in latex allergic reactions.</text>
</comment>
<comment type="similarity">
    <text evidence="2">Belongs to the profilin family.</text>
</comment>
<name>PROF6_HEVBR</name>
<proteinExistence type="evidence at protein level"/>
<evidence type="ECO:0000250" key="1"/>
<evidence type="ECO:0000305" key="2"/>
<evidence type="ECO:0007829" key="3">
    <source>
        <dbReference type="PDB" id="1G5U"/>
    </source>
</evidence>
<reference key="1">
    <citation type="submission" date="1999-06" db="EMBL/GenBank/DDBJ databases">
        <title>Molecular and immunological characterisation of profilin from Hevea brasiliensis.</title>
        <authorList>
            <person name="Ganglberger E."/>
            <person name="Scheiner O."/>
            <person name="Breiteneder H."/>
        </authorList>
    </citation>
    <scope>NUCLEOTIDE SEQUENCE [MRNA]</scope>
</reference>